<reference key="1">
    <citation type="journal article" date="2007" name="ISME J.">
        <title>Population level functional diversity in a microbial community revealed by comparative genomic and metagenomic analyses.</title>
        <authorList>
            <person name="Bhaya D."/>
            <person name="Grossman A.R."/>
            <person name="Steunou A.-S."/>
            <person name="Khuri N."/>
            <person name="Cohan F.M."/>
            <person name="Hamamura N."/>
            <person name="Melendrez M.C."/>
            <person name="Bateson M.M."/>
            <person name="Ward D.M."/>
            <person name="Heidelberg J.F."/>
        </authorList>
    </citation>
    <scope>NUCLEOTIDE SEQUENCE [LARGE SCALE GENOMIC DNA]</scope>
    <source>
        <strain>JA-2-3B'a(2-13)</strain>
    </source>
</reference>
<organism>
    <name type="scientific">Synechococcus sp. (strain JA-2-3B'a(2-13))</name>
    <name type="common">Cyanobacteria bacterium Yellowstone B-Prime</name>
    <dbReference type="NCBI Taxonomy" id="321332"/>
    <lineage>
        <taxon>Bacteria</taxon>
        <taxon>Bacillati</taxon>
        <taxon>Cyanobacteriota</taxon>
        <taxon>Cyanophyceae</taxon>
        <taxon>Synechococcales</taxon>
        <taxon>Synechococcaceae</taxon>
        <taxon>Synechococcus</taxon>
    </lineage>
</organism>
<accession>Q2JNK3</accession>
<evidence type="ECO:0000255" key="1">
    <source>
        <dbReference type="HAMAP-Rule" id="MF_00076"/>
    </source>
</evidence>
<evidence type="ECO:0000256" key="2">
    <source>
        <dbReference type="SAM" id="MobiDB-lite"/>
    </source>
</evidence>
<protein>
    <recommendedName>
        <fullName evidence="1">Imidazoleglycerol-phosphate dehydratase</fullName>
        <shortName evidence="1">IGPD</shortName>
        <ecNumber evidence="1">4.2.1.19</ecNumber>
    </recommendedName>
</protein>
<keyword id="KW-0028">Amino-acid biosynthesis</keyword>
<keyword id="KW-0963">Cytoplasm</keyword>
<keyword id="KW-0368">Histidine biosynthesis</keyword>
<keyword id="KW-0456">Lyase</keyword>
<keyword id="KW-1185">Reference proteome</keyword>
<name>HIS7_SYNJB</name>
<sequence>MTALDSSRLLQPRTASVHRRTGETDVQIHLNLDGSGRHEIDTGIPFLDHMLAQLSTHGLIDLQIKAIGDLHIDDHHTNEDVGITLGQALAQALQDRRGIHRFGHFWAPLDEALVQVVLDFSGRPHLSYGLELPTERIGRYETQLVREFYQAVVNHAQLTLHIRQAAGLNAHHIVEASFKAFARALRMAVERDPRRQEGIPSSKGVL</sequence>
<comment type="catalytic activity">
    <reaction evidence="1">
        <text>D-erythro-1-(imidazol-4-yl)glycerol 3-phosphate = 3-(imidazol-4-yl)-2-oxopropyl phosphate + H2O</text>
        <dbReference type="Rhea" id="RHEA:11040"/>
        <dbReference type="ChEBI" id="CHEBI:15377"/>
        <dbReference type="ChEBI" id="CHEBI:57766"/>
        <dbReference type="ChEBI" id="CHEBI:58278"/>
        <dbReference type="EC" id="4.2.1.19"/>
    </reaction>
</comment>
<comment type="pathway">
    <text evidence="1">Amino-acid biosynthesis; L-histidine biosynthesis; L-histidine from 5-phospho-alpha-D-ribose 1-diphosphate: step 6/9.</text>
</comment>
<comment type="subcellular location">
    <subcellularLocation>
        <location evidence="1">Cytoplasm</location>
    </subcellularLocation>
</comment>
<comment type="similarity">
    <text evidence="1">Belongs to the imidazoleglycerol-phosphate dehydratase family.</text>
</comment>
<dbReference type="EC" id="4.2.1.19" evidence="1"/>
<dbReference type="EMBL" id="CP000240">
    <property type="protein sequence ID" value="ABD01656.1"/>
    <property type="molecule type" value="Genomic_DNA"/>
</dbReference>
<dbReference type="RefSeq" id="WP_011432314.1">
    <property type="nucleotide sequence ID" value="NC_007776.1"/>
</dbReference>
<dbReference type="SMR" id="Q2JNK3"/>
<dbReference type="STRING" id="321332.CYB_0671"/>
<dbReference type="KEGG" id="cyb:CYB_0671"/>
<dbReference type="eggNOG" id="COG0131">
    <property type="taxonomic scope" value="Bacteria"/>
</dbReference>
<dbReference type="HOGENOM" id="CLU_044308_3_0_3"/>
<dbReference type="OrthoDB" id="9790411at2"/>
<dbReference type="UniPathway" id="UPA00031">
    <property type="reaction ID" value="UER00011"/>
</dbReference>
<dbReference type="Proteomes" id="UP000001938">
    <property type="component" value="Chromosome"/>
</dbReference>
<dbReference type="GO" id="GO:0005737">
    <property type="term" value="C:cytoplasm"/>
    <property type="evidence" value="ECO:0007669"/>
    <property type="project" value="UniProtKB-SubCell"/>
</dbReference>
<dbReference type="GO" id="GO:0004424">
    <property type="term" value="F:imidazoleglycerol-phosphate dehydratase activity"/>
    <property type="evidence" value="ECO:0007669"/>
    <property type="project" value="UniProtKB-UniRule"/>
</dbReference>
<dbReference type="GO" id="GO:0000105">
    <property type="term" value="P:L-histidine biosynthetic process"/>
    <property type="evidence" value="ECO:0007669"/>
    <property type="project" value="UniProtKB-UniRule"/>
</dbReference>
<dbReference type="CDD" id="cd07914">
    <property type="entry name" value="IGPD"/>
    <property type="match status" value="1"/>
</dbReference>
<dbReference type="FunFam" id="3.30.230.40:FF:000002">
    <property type="entry name" value="Imidazoleglycerol-phosphate dehydratase"/>
    <property type="match status" value="1"/>
</dbReference>
<dbReference type="FunFam" id="3.30.230.40:FF:000003">
    <property type="entry name" value="Imidazoleglycerol-phosphate dehydratase HisB"/>
    <property type="match status" value="1"/>
</dbReference>
<dbReference type="Gene3D" id="3.30.230.40">
    <property type="entry name" value="Imidazole glycerol phosphate dehydratase, domain 1"/>
    <property type="match status" value="2"/>
</dbReference>
<dbReference type="HAMAP" id="MF_00076">
    <property type="entry name" value="HisB"/>
    <property type="match status" value="1"/>
</dbReference>
<dbReference type="InterPro" id="IPR038494">
    <property type="entry name" value="IGPD_sf"/>
</dbReference>
<dbReference type="InterPro" id="IPR000807">
    <property type="entry name" value="ImidazoleglycerolP_deHydtase"/>
</dbReference>
<dbReference type="InterPro" id="IPR020565">
    <property type="entry name" value="ImidazoleglycerP_deHydtase_CS"/>
</dbReference>
<dbReference type="InterPro" id="IPR020568">
    <property type="entry name" value="Ribosomal_Su5_D2-typ_SF"/>
</dbReference>
<dbReference type="NCBIfam" id="NF002106">
    <property type="entry name" value="PRK00951.1-1"/>
    <property type="match status" value="1"/>
</dbReference>
<dbReference type="NCBIfam" id="NF002108">
    <property type="entry name" value="PRK00951.1-3"/>
    <property type="match status" value="1"/>
</dbReference>
<dbReference type="NCBIfam" id="NF002109">
    <property type="entry name" value="PRK00951.1-5"/>
    <property type="match status" value="1"/>
</dbReference>
<dbReference type="NCBIfam" id="NF002111">
    <property type="entry name" value="PRK00951.2-1"/>
    <property type="match status" value="1"/>
</dbReference>
<dbReference type="NCBIfam" id="NF002114">
    <property type="entry name" value="PRK00951.2-4"/>
    <property type="match status" value="1"/>
</dbReference>
<dbReference type="PANTHER" id="PTHR23133:SF2">
    <property type="entry name" value="IMIDAZOLEGLYCEROL-PHOSPHATE DEHYDRATASE"/>
    <property type="match status" value="1"/>
</dbReference>
<dbReference type="PANTHER" id="PTHR23133">
    <property type="entry name" value="IMIDAZOLEGLYCEROL-PHOSPHATE DEHYDRATASE HIS7"/>
    <property type="match status" value="1"/>
</dbReference>
<dbReference type="Pfam" id="PF00475">
    <property type="entry name" value="IGPD"/>
    <property type="match status" value="1"/>
</dbReference>
<dbReference type="SUPFAM" id="SSF54211">
    <property type="entry name" value="Ribosomal protein S5 domain 2-like"/>
    <property type="match status" value="2"/>
</dbReference>
<dbReference type="PROSITE" id="PS00954">
    <property type="entry name" value="IGP_DEHYDRATASE_1"/>
    <property type="match status" value="1"/>
</dbReference>
<dbReference type="PROSITE" id="PS00955">
    <property type="entry name" value="IGP_DEHYDRATASE_2"/>
    <property type="match status" value="1"/>
</dbReference>
<proteinExistence type="inferred from homology"/>
<feature type="chain" id="PRO_0000336349" description="Imidazoleglycerol-phosphate dehydratase">
    <location>
        <begin position="1"/>
        <end position="206"/>
    </location>
</feature>
<feature type="region of interest" description="Disordered" evidence="2">
    <location>
        <begin position="1"/>
        <end position="21"/>
    </location>
</feature>
<gene>
    <name evidence="1" type="primary">hisB</name>
    <name type="ordered locus">CYB_0671</name>
</gene>